<evidence type="ECO:0000250" key="1"/>
<evidence type="ECO:0000255" key="2"/>
<evidence type="ECO:0000255" key="3">
    <source>
        <dbReference type="PROSITE-ProRule" id="PRU00202"/>
    </source>
</evidence>
<evidence type="ECO:0000269" key="4">
    <source>
    </source>
</evidence>
<evidence type="ECO:0000269" key="5">
    <source>
    </source>
</evidence>
<evidence type="ECO:0000305" key="6"/>
<evidence type="ECO:0007744" key="7">
    <source>
    </source>
</evidence>
<organism>
    <name type="scientific">Mus musculus</name>
    <name type="common">Mouse</name>
    <dbReference type="NCBI Taxonomy" id="10090"/>
    <lineage>
        <taxon>Eukaryota</taxon>
        <taxon>Metazoa</taxon>
        <taxon>Chordata</taxon>
        <taxon>Craniata</taxon>
        <taxon>Vertebrata</taxon>
        <taxon>Euteleostomi</taxon>
        <taxon>Mammalia</taxon>
        <taxon>Eutheria</taxon>
        <taxon>Euarchontoglires</taxon>
        <taxon>Glires</taxon>
        <taxon>Rodentia</taxon>
        <taxon>Myomorpha</taxon>
        <taxon>Muroidea</taxon>
        <taxon>Muridae</taxon>
        <taxon>Murinae</taxon>
        <taxon>Mus</taxon>
        <taxon>Mus</taxon>
    </lineage>
</organism>
<name>STX8_MOUSE</name>
<proteinExistence type="evidence at protein level"/>
<sequence>MAPDPWFSTYDSTCQIAQEIAEKIQERNQCERRGEKTPKLTLTIRTLLKNLKVKIDLLKDLLLRAVSTRQITQLEGDRRQNLLDDLVTRERLLLASFKNEGAEPDLIRSSLMSEEAKRGTPNPWLCEEPEETRGLGFDEIRQQQQKIIQEQDAGLDALSSIISRQKQMGQEIGNELDEQNEIIDDLANLVENTDEKLRTEARRVTLVDRKSTSCGMIMVILLLLVAIVVVAVWPTN</sequence>
<protein>
    <recommendedName>
        <fullName>Syntaxin-8</fullName>
    </recommendedName>
    <alternativeName>
        <fullName>Syntaxin-like protein 3I35</fullName>
    </alternativeName>
</protein>
<feature type="chain" id="PRO_0000210218" description="Syntaxin-8">
    <location>
        <begin position="1"/>
        <end position="236"/>
    </location>
</feature>
<feature type="topological domain" description="Cytoplasmic" evidence="2">
    <location>
        <begin position="1"/>
        <end position="215"/>
    </location>
</feature>
<feature type="transmembrane region" description="Helical; Anchor for type IV membrane protein" evidence="2">
    <location>
        <begin position="216"/>
        <end position="232"/>
    </location>
</feature>
<feature type="topological domain" description="Vesicular" evidence="2">
    <location>
        <begin position="233"/>
        <end position="236"/>
    </location>
</feature>
<feature type="domain" description="t-SNARE coiled-coil homology" evidence="3">
    <location>
        <begin position="145"/>
        <end position="207"/>
    </location>
</feature>
<feature type="coiled-coil region" evidence="1">
    <location>
        <begin position="42"/>
        <end position="65"/>
    </location>
</feature>
<feature type="modified residue" description="Phosphoserine" evidence="7">
    <location>
        <position position="160"/>
    </location>
</feature>
<accession>O88983</accession>
<gene>
    <name type="primary">Stx8</name>
</gene>
<keyword id="KW-0175">Coiled coil</keyword>
<keyword id="KW-0472">Membrane</keyword>
<keyword id="KW-0597">Phosphoprotein</keyword>
<keyword id="KW-1185">Reference proteome</keyword>
<keyword id="KW-0812">Transmembrane</keyword>
<keyword id="KW-1133">Transmembrane helix</keyword>
<keyword id="KW-0813">Transport</keyword>
<keyword id="KW-0832">Ubl conjugation</keyword>
<comment type="function">
    <text evidence="1">Vesicle trafficking protein that functions in the early secretory pathway, possibly by mediating retrograde transport from cis-Golgi membranes to the ER.</text>
</comment>
<comment type="subunit">
    <text evidence="1 4 5">Forms a SNARE complex with STX7, VTI1B and VAMP8 which functions in the homotypic fusion of late endosomes. Part of the SNARE core complex containing STX7, VAMP8 and VTI1B. Interacts with VAMP8 (By similarity). Interacts with HECTD3. Interacts with TPC1 (PubMed:28855648).</text>
</comment>
<comment type="subcellular location">
    <subcellularLocation>
        <location evidence="1">Membrane</location>
        <topology evidence="1">Single-pass type IV membrane protein</topology>
    </subcellularLocation>
    <text evidence="1">Preferentially associated with the early endosome. To a lesser extent, also present in late endosome, the plasma membrane and coated pits (By similarity).</text>
</comment>
<comment type="PTM">
    <text evidence="4">Ubiquitinated by HECTD3.</text>
</comment>
<comment type="similarity">
    <text evidence="6">Belongs to the syntaxin family.</text>
</comment>
<dbReference type="EMBL" id="AF093064">
    <property type="protein sequence ID" value="AAC64149.1"/>
    <property type="molecule type" value="mRNA"/>
</dbReference>
<dbReference type="EMBL" id="AF036716">
    <property type="protein sequence ID" value="AAC95286.1"/>
    <property type="molecule type" value="mRNA"/>
</dbReference>
<dbReference type="EMBL" id="AB040054">
    <property type="protein sequence ID" value="BAB20500.1"/>
    <property type="molecule type" value="mRNA"/>
</dbReference>
<dbReference type="EMBL" id="AK003297">
    <property type="protein sequence ID" value="BAB22698.1"/>
    <property type="molecule type" value="mRNA"/>
</dbReference>
<dbReference type="EMBL" id="AL663076">
    <property type="status" value="NOT_ANNOTATED_CDS"/>
    <property type="molecule type" value="Genomic_DNA"/>
</dbReference>
<dbReference type="EMBL" id="AL669842">
    <property type="status" value="NOT_ANNOTATED_CDS"/>
    <property type="molecule type" value="Genomic_DNA"/>
</dbReference>
<dbReference type="EMBL" id="BC048167">
    <property type="protein sequence ID" value="AAH48167.1"/>
    <property type="molecule type" value="mRNA"/>
</dbReference>
<dbReference type="EMBL" id="BC048479">
    <property type="protein sequence ID" value="AAH48479.1"/>
    <property type="molecule type" value="mRNA"/>
</dbReference>
<dbReference type="CCDS" id="CCDS24863.1"/>
<dbReference type="RefSeq" id="NP_061238.1">
    <property type="nucleotide sequence ID" value="NM_018768.3"/>
</dbReference>
<dbReference type="SMR" id="O88983"/>
<dbReference type="BioGRID" id="207739">
    <property type="interactions" value="5"/>
</dbReference>
<dbReference type="CORUM" id="O88983"/>
<dbReference type="FunCoup" id="O88983">
    <property type="interactions" value="1934"/>
</dbReference>
<dbReference type="IntAct" id="O88983">
    <property type="interactions" value="1"/>
</dbReference>
<dbReference type="STRING" id="10090.ENSMUSP00000021285"/>
<dbReference type="TCDB" id="1.F.1.1.4">
    <property type="family name" value="the synaptosomal vesicle fusion pore (svf-pore) family"/>
</dbReference>
<dbReference type="iPTMnet" id="O88983"/>
<dbReference type="PhosphoSitePlus" id="O88983"/>
<dbReference type="SwissPalm" id="O88983"/>
<dbReference type="jPOST" id="O88983"/>
<dbReference type="PaxDb" id="10090-ENSMUSP00000021285"/>
<dbReference type="PeptideAtlas" id="O88983"/>
<dbReference type="ProteomicsDB" id="257370"/>
<dbReference type="Pumba" id="O88983"/>
<dbReference type="Antibodypedia" id="726">
    <property type="antibodies" value="193 antibodies from 27 providers"/>
</dbReference>
<dbReference type="DNASU" id="55943"/>
<dbReference type="Ensembl" id="ENSMUST00000021285.14">
    <property type="protein sequence ID" value="ENSMUSP00000021285.8"/>
    <property type="gene ID" value="ENSMUSG00000020903.14"/>
</dbReference>
<dbReference type="GeneID" id="55943"/>
<dbReference type="KEGG" id="mmu:55943"/>
<dbReference type="UCSC" id="uc007jnj.1">
    <property type="organism name" value="mouse"/>
</dbReference>
<dbReference type="AGR" id="MGI:1890156"/>
<dbReference type="CTD" id="9482"/>
<dbReference type="MGI" id="MGI:1890156">
    <property type="gene designation" value="Stx8"/>
</dbReference>
<dbReference type="VEuPathDB" id="HostDB:ENSMUSG00000020903"/>
<dbReference type="eggNOG" id="KOG3202">
    <property type="taxonomic scope" value="Eukaryota"/>
</dbReference>
<dbReference type="GeneTree" id="ENSGT00390000007779"/>
<dbReference type="HOGENOM" id="CLU_099972_1_0_1"/>
<dbReference type="InParanoid" id="O88983"/>
<dbReference type="OMA" id="DSTCYIA"/>
<dbReference type="OrthoDB" id="428895at2759"/>
<dbReference type="PhylomeDB" id="O88983"/>
<dbReference type="TreeFam" id="TF323262"/>
<dbReference type="BioGRID-ORCS" id="55943">
    <property type="hits" value="3 hits in 76 CRISPR screens"/>
</dbReference>
<dbReference type="ChiTaRS" id="Stx8">
    <property type="organism name" value="mouse"/>
</dbReference>
<dbReference type="PRO" id="PR:O88983"/>
<dbReference type="Proteomes" id="UP000000589">
    <property type="component" value="Chromosome 11"/>
</dbReference>
<dbReference type="RNAct" id="O88983">
    <property type="molecule type" value="protein"/>
</dbReference>
<dbReference type="Bgee" id="ENSMUSG00000020903">
    <property type="expression patterns" value="Expressed in vestibular membrane of cochlear duct and 250 other cell types or tissues"/>
</dbReference>
<dbReference type="ExpressionAtlas" id="O88983">
    <property type="expression patterns" value="baseline and differential"/>
</dbReference>
<dbReference type="GO" id="GO:0005769">
    <property type="term" value="C:early endosome"/>
    <property type="evidence" value="ECO:0007669"/>
    <property type="project" value="Ensembl"/>
</dbReference>
<dbReference type="GO" id="GO:0005770">
    <property type="term" value="C:late endosome"/>
    <property type="evidence" value="ECO:0000314"/>
    <property type="project" value="MGI"/>
</dbReference>
<dbReference type="GO" id="GO:0016020">
    <property type="term" value="C:membrane"/>
    <property type="evidence" value="ECO:0007669"/>
    <property type="project" value="UniProtKB-SubCell"/>
</dbReference>
<dbReference type="GO" id="GO:0048471">
    <property type="term" value="C:perinuclear region of cytoplasm"/>
    <property type="evidence" value="ECO:0007669"/>
    <property type="project" value="Ensembl"/>
</dbReference>
<dbReference type="GO" id="GO:0045335">
    <property type="term" value="C:phagocytic vesicle"/>
    <property type="evidence" value="ECO:0000314"/>
    <property type="project" value="MGI"/>
</dbReference>
<dbReference type="GO" id="GO:0055037">
    <property type="term" value="C:recycling endosome"/>
    <property type="evidence" value="ECO:0007669"/>
    <property type="project" value="Ensembl"/>
</dbReference>
<dbReference type="GO" id="GO:0005802">
    <property type="term" value="C:trans-Golgi network"/>
    <property type="evidence" value="ECO:0007669"/>
    <property type="project" value="Ensembl"/>
</dbReference>
<dbReference type="GO" id="GO:0019869">
    <property type="term" value="F:chloride channel inhibitor activity"/>
    <property type="evidence" value="ECO:0007669"/>
    <property type="project" value="Ensembl"/>
</dbReference>
<dbReference type="GO" id="GO:0000149">
    <property type="term" value="F:SNARE binding"/>
    <property type="evidence" value="ECO:0000266"/>
    <property type="project" value="MGI"/>
</dbReference>
<dbReference type="GO" id="GO:0019905">
    <property type="term" value="F:syntaxin binding"/>
    <property type="evidence" value="ECO:0007669"/>
    <property type="project" value="Ensembl"/>
</dbReference>
<dbReference type="GO" id="GO:0031625">
    <property type="term" value="F:ubiquitin protein ligase binding"/>
    <property type="evidence" value="ECO:0000353"/>
    <property type="project" value="UniProtKB"/>
</dbReference>
<dbReference type="GO" id="GO:0071346">
    <property type="term" value="P:cellular response to type II interferon"/>
    <property type="evidence" value="ECO:0000314"/>
    <property type="project" value="MGI"/>
</dbReference>
<dbReference type="GO" id="GO:0045022">
    <property type="term" value="P:early endosome to late endosome transport"/>
    <property type="evidence" value="ECO:0007669"/>
    <property type="project" value="Ensembl"/>
</dbReference>
<dbReference type="GO" id="GO:1903076">
    <property type="term" value="P:regulation of protein localization to plasma membrane"/>
    <property type="evidence" value="ECO:0007669"/>
    <property type="project" value="Ensembl"/>
</dbReference>
<dbReference type="CDD" id="cd15852">
    <property type="entry name" value="SNARE_Syntaxin8"/>
    <property type="match status" value="1"/>
</dbReference>
<dbReference type="FunFam" id="1.20.5.110:FF:000036">
    <property type="entry name" value="Putative Syntaxin-8"/>
    <property type="match status" value="1"/>
</dbReference>
<dbReference type="Gene3D" id="1.20.5.110">
    <property type="match status" value="1"/>
</dbReference>
<dbReference type="InterPro" id="IPR045242">
    <property type="entry name" value="Syntaxin"/>
</dbReference>
<dbReference type="InterPro" id="IPR041875">
    <property type="entry name" value="Syntaxin-8_SNARE"/>
</dbReference>
<dbReference type="InterPro" id="IPR000727">
    <property type="entry name" value="T_SNARE_dom"/>
</dbReference>
<dbReference type="PANTHER" id="PTHR19957">
    <property type="entry name" value="SYNTAXIN"/>
    <property type="match status" value="1"/>
</dbReference>
<dbReference type="PANTHER" id="PTHR19957:SF124">
    <property type="entry name" value="SYNTAXIN-8"/>
    <property type="match status" value="1"/>
</dbReference>
<dbReference type="Pfam" id="PF05739">
    <property type="entry name" value="SNARE"/>
    <property type="match status" value="1"/>
</dbReference>
<dbReference type="SMART" id="SM00397">
    <property type="entry name" value="t_SNARE"/>
    <property type="match status" value="1"/>
</dbReference>
<dbReference type="SUPFAM" id="SSF58038">
    <property type="entry name" value="SNARE fusion complex"/>
    <property type="match status" value="1"/>
</dbReference>
<dbReference type="PROSITE" id="PS50192">
    <property type="entry name" value="T_SNARE"/>
    <property type="match status" value="1"/>
</dbReference>
<reference key="1">
    <citation type="submission" date="1998-09" db="EMBL/GenBank/DDBJ databases">
        <authorList>
            <person name="Thoreau V."/>
            <person name="Bilan F."/>
            <person name="Kitzis A."/>
            <person name="Chomel J.-C."/>
        </authorList>
    </citation>
    <scope>NUCLEOTIDE SEQUENCE [MRNA]</scope>
</reference>
<reference key="2">
    <citation type="submission" date="1997-12" db="EMBL/GenBank/DDBJ databases">
        <authorList>
            <person name="Subramaniam V.N."/>
            <person name="Loh E."/>
            <person name="Hong W."/>
        </authorList>
    </citation>
    <scope>NUCLEOTIDE SEQUENCE [MRNA]</scope>
</reference>
<reference key="3">
    <citation type="submission" date="1998-10" db="EMBL/GenBank/DDBJ databases">
        <title>Mouse syntaxin8.</title>
        <authorList>
            <person name="Nakamura N."/>
            <person name="Wada Y."/>
            <person name="Futai M."/>
        </authorList>
    </citation>
    <scope>NUCLEOTIDE SEQUENCE [MRNA]</scope>
    <source>
        <strain>C3H/HeJ</strain>
    </source>
</reference>
<reference key="4">
    <citation type="journal article" date="2005" name="Science">
        <title>The transcriptional landscape of the mammalian genome.</title>
        <authorList>
            <person name="Carninci P."/>
            <person name="Kasukawa T."/>
            <person name="Katayama S."/>
            <person name="Gough J."/>
            <person name="Frith M.C."/>
            <person name="Maeda N."/>
            <person name="Oyama R."/>
            <person name="Ravasi T."/>
            <person name="Lenhard B."/>
            <person name="Wells C."/>
            <person name="Kodzius R."/>
            <person name="Shimokawa K."/>
            <person name="Bajic V.B."/>
            <person name="Brenner S.E."/>
            <person name="Batalov S."/>
            <person name="Forrest A.R."/>
            <person name="Zavolan M."/>
            <person name="Davis M.J."/>
            <person name="Wilming L.G."/>
            <person name="Aidinis V."/>
            <person name="Allen J.E."/>
            <person name="Ambesi-Impiombato A."/>
            <person name="Apweiler R."/>
            <person name="Aturaliya R.N."/>
            <person name="Bailey T.L."/>
            <person name="Bansal M."/>
            <person name="Baxter L."/>
            <person name="Beisel K.W."/>
            <person name="Bersano T."/>
            <person name="Bono H."/>
            <person name="Chalk A.M."/>
            <person name="Chiu K.P."/>
            <person name="Choudhary V."/>
            <person name="Christoffels A."/>
            <person name="Clutterbuck D.R."/>
            <person name="Crowe M.L."/>
            <person name="Dalla E."/>
            <person name="Dalrymple B.P."/>
            <person name="de Bono B."/>
            <person name="Della Gatta G."/>
            <person name="di Bernardo D."/>
            <person name="Down T."/>
            <person name="Engstrom P."/>
            <person name="Fagiolini M."/>
            <person name="Faulkner G."/>
            <person name="Fletcher C.F."/>
            <person name="Fukushima T."/>
            <person name="Furuno M."/>
            <person name="Futaki S."/>
            <person name="Gariboldi M."/>
            <person name="Georgii-Hemming P."/>
            <person name="Gingeras T.R."/>
            <person name="Gojobori T."/>
            <person name="Green R.E."/>
            <person name="Gustincich S."/>
            <person name="Harbers M."/>
            <person name="Hayashi Y."/>
            <person name="Hensch T.K."/>
            <person name="Hirokawa N."/>
            <person name="Hill D."/>
            <person name="Huminiecki L."/>
            <person name="Iacono M."/>
            <person name="Ikeo K."/>
            <person name="Iwama A."/>
            <person name="Ishikawa T."/>
            <person name="Jakt M."/>
            <person name="Kanapin A."/>
            <person name="Katoh M."/>
            <person name="Kawasawa Y."/>
            <person name="Kelso J."/>
            <person name="Kitamura H."/>
            <person name="Kitano H."/>
            <person name="Kollias G."/>
            <person name="Krishnan S.P."/>
            <person name="Kruger A."/>
            <person name="Kummerfeld S.K."/>
            <person name="Kurochkin I.V."/>
            <person name="Lareau L.F."/>
            <person name="Lazarevic D."/>
            <person name="Lipovich L."/>
            <person name="Liu J."/>
            <person name="Liuni S."/>
            <person name="McWilliam S."/>
            <person name="Madan Babu M."/>
            <person name="Madera M."/>
            <person name="Marchionni L."/>
            <person name="Matsuda H."/>
            <person name="Matsuzawa S."/>
            <person name="Miki H."/>
            <person name="Mignone F."/>
            <person name="Miyake S."/>
            <person name="Morris K."/>
            <person name="Mottagui-Tabar S."/>
            <person name="Mulder N."/>
            <person name="Nakano N."/>
            <person name="Nakauchi H."/>
            <person name="Ng P."/>
            <person name="Nilsson R."/>
            <person name="Nishiguchi S."/>
            <person name="Nishikawa S."/>
            <person name="Nori F."/>
            <person name="Ohara O."/>
            <person name="Okazaki Y."/>
            <person name="Orlando V."/>
            <person name="Pang K.C."/>
            <person name="Pavan W.J."/>
            <person name="Pavesi G."/>
            <person name="Pesole G."/>
            <person name="Petrovsky N."/>
            <person name="Piazza S."/>
            <person name="Reed J."/>
            <person name="Reid J.F."/>
            <person name="Ring B.Z."/>
            <person name="Ringwald M."/>
            <person name="Rost B."/>
            <person name="Ruan Y."/>
            <person name="Salzberg S.L."/>
            <person name="Sandelin A."/>
            <person name="Schneider C."/>
            <person name="Schoenbach C."/>
            <person name="Sekiguchi K."/>
            <person name="Semple C.A."/>
            <person name="Seno S."/>
            <person name="Sessa L."/>
            <person name="Sheng Y."/>
            <person name="Shibata Y."/>
            <person name="Shimada H."/>
            <person name="Shimada K."/>
            <person name="Silva D."/>
            <person name="Sinclair B."/>
            <person name="Sperling S."/>
            <person name="Stupka E."/>
            <person name="Sugiura K."/>
            <person name="Sultana R."/>
            <person name="Takenaka Y."/>
            <person name="Taki K."/>
            <person name="Tammoja K."/>
            <person name="Tan S.L."/>
            <person name="Tang S."/>
            <person name="Taylor M.S."/>
            <person name="Tegner J."/>
            <person name="Teichmann S.A."/>
            <person name="Ueda H.R."/>
            <person name="van Nimwegen E."/>
            <person name="Verardo R."/>
            <person name="Wei C.L."/>
            <person name="Yagi K."/>
            <person name="Yamanishi H."/>
            <person name="Zabarovsky E."/>
            <person name="Zhu S."/>
            <person name="Zimmer A."/>
            <person name="Hide W."/>
            <person name="Bult C."/>
            <person name="Grimmond S.M."/>
            <person name="Teasdale R.D."/>
            <person name="Liu E.T."/>
            <person name="Brusic V."/>
            <person name="Quackenbush J."/>
            <person name="Wahlestedt C."/>
            <person name="Mattick J.S."/>
            <person name="Hume D.A."/>
            <person name="Kai C."/>
            <person name="Sasaki D."/>
            <person name="Tomaru Y."/>
            <person name="Fukuda S."/>
            <person name="Kanamori-Katayama M."/>
            <person name="Suzuki M."/>
            <person name="Aoki J."/>
            <person name="Arakawa T."/>
            <person name="Iida J."/>
            <person name="Imamura K."/>
            <person name="Itoh M."/>
            <person name="Kato T."/>
            <person name="Kawaji H."/>
            <person name="Kawagashira N."/>
            <person name="Kawashima T."/>
            <person name="Kojima M."/>
            <person name="Kondo S."/>
            <person name="Konno H."/>
            <person name="Nakano K."/>
            <person name="Ninomiya N."/>
            <person name="Nishio T."/>
            <person name="Okada M."/>
            <person name="Plessy C."/>
            <person name="Shibata K."/>
            <person name="Shiraki T."/>
            <person name="Suzuki S."/>
            <person name="Tagami M."/>
            <person name="Waki K."/>
            <person name="Watahiki A."/>
            <person name="Okamura-Oho Y."/>
            <person name="Suzuki H."/>
            <person name="Kawai J."/>
            <person name="Hayashizaki Y."/>
        </authorList>
    </citation>
    <scope>NUCLEOTIDE SEQUENCE [LARGE SCALE MRNA]</scope>
    <source>
        <strain>C57BL/6J</strain>
        <tissue>Embryo</tissue>
    </source>
</reference>
<reference key="5">
    <citation type="journal article" date="2009" name="PLoS Biol.">
        <title>Lineage-specific biology revealed by a finished genome assembly of the mouse.</title>
        <authorList>
            <person name="Church D.M."/>
            <person name="Goodstadt L."/>
            <person name="Hillier L.W."/>
            <person name="Zody M.C."/>
            <person name="Goldstein S."/>
            <person name="She X."/>
            <person name="Bult C.J."/>
            <person name="Agarwala R."/>
            <person name="Cherry J.L."/>
            <person name="DiCuccio M."/>
            <person name="Hlavina W."/>
            <person name="Kapustin Y."/>
            <person name="Meric P."/>
            <person name="Maglott D."/>
            <person name="Birtle Z."/>
            <person name="Marques A.C."/>
            <person name="Graves T."/>
            <person name="Zhou S."/>
            <person name="Teague B."/>
            <person name="Potamousis K."/>
            <person name="Churas C."/>
            <person name="Place M."/>
            <person name="Herschleb J."/>
            <person name="Runnheim R."/>
            <person name="Forrest D."/>
            <person name="Amos-Landgraf J."/>
            <person name="Schwartz D.C."/>
            <person name="Cheng Z."/>
            <person name="Lindblad-Toh K."/>
            <person name="Eichler E.E."/>
            <person name="Ponting C.P."/>
        </authorList>
    </citation>
    <scope>NUCLEOTIDE SEQUENCE [LARGE SCALE GENOMIC DNA]</scope>
    <source>
        <strain>C57BL/6J</strain>
    </source>
</reference>
<reference key="6">
    <citation type="journal article" date="2004" name="Genome Res.">
        <title>The status, quality, and expansion of the NIH full-length cDNA project: the Mammalian Gene Collection (MGC).</title>
        <authorList>
            <consortium name="The MGC Project Team"/>
        </authorList>
    </citation>
    <scope>NUCLEOTIDE SEQUENCE [LARGE SCALE MRNA]</scope>
    <source>
        <strain>C57BL/6J</strain>
        <tissue>Brain</tissue>
        <tissue>Testis</tissue>
    </source>
</reference>
<reference key="7">
    <citation type="journal article" date="2009" name="Cell. Mol. Neurobiol.">
        <title>Interaction between syntaxin 8 and HECTd3, a HECT domain ligase.</title>
        <authorList>
            <person name="Zhang L."/>
            <person name="Kang L."/>
            <person name="Bond W."/>
            <person name="Zhang N."/>
        </authorList>
    </citation>
    <scope>INTERACTION WITH HECTD3</scope>
    <scope>UBIQUITINATION</scope>
</reference>
<reference key="8">
    <citation type="journal article" date="2009" name="Immunity">
        <title>The phagosomal proteome in interferon-gamma-activated macrophages.</title>
        <authorList>
            <person name="Trost M."/>
            <person name="English L."/>
            <person name="Lemieux S."/>
            <person name="Courcelles M."/>
            <person name="Desjardins M."/>
            <person name="Thibault P."/>
        </authorList>
    </citation>
    <scope>PHOSPHORYLATION [LARGE SCALE ANALYSIS] AT SER-160</scope>
    <scope>IDENTIFICATION BY MASS SPECTROMETRY [LARGE SCALE ANALYSIS]</scope>
</reference>
<reference key="9">
    <citation type="journal article" date="2010" name="Cell">
        <title>A tissue-specific atlas of mouse protein phosphorylation and expression.</title>
        <authorList>
            <person name="Huttlin E.L."/>
            <person name="Jedrychowski M.P."/>
            <person name="Elias J.E."/>
            <person name="Goswami T."/>
            <person name="Rad R."/>
            <person name="Beausoleil S.A."/>
            <person name="Villen J."/>
            <person name="Haas W."/>
            <person name="Sowa M.E."/>
            <person name="Gygi S.P."/>
        </authorList>
    </citation>
    <scope>IDENTIFICATION BY MASS SPECTROMETRY [LARGE SCALE ANALYSIS]</scope>
    <source>
        <tissue>Brain</tissue>
        <tissue>Heart</tissue>
        <tissue>Kidney</tissue>
        <tissue>Liver</tissue>
        <tissue>Lung</tissue>
        <tissue>Spleen</tissue>
        <tissue>Testis</tissue>
    </source>
</reference>
<reference key="10">
    <citation type="journal article" date="2017" name="Sci. Rep.">
        <title>The two-pore channel TPC1 is required for efficient protein processing through early and recycling endosomes.</title>
        <authorList>
            <person name="Castonguay J."/>
            <person name="Orth J.H.C."/>
            <person name="Mueller T."/>
            <person name="Sleman F."/>
            <person name="Grimm C."/>
            <person name="Wahl-Schott C."/>
            <person name="Biel M."/>
            <person name="Mallmann R.T."/>
            <person name="Bildl W."/>
            <person name="Schulte U."/>
            <person name="Klugbauer N."/>
        </authorList>
    </citation>
    <scope>INTERACTION WITH TPC1</scope>
</reference>